<sequence length="216" mass="23189">MRVILLGAPGAGKGTQAKFITEKFGIPQISTGDMLRAAVKAGTELGIKAKSIMDAGGLVSDDLIIALVKDRIAQADCAKGFLFDGFPRTIPQAEALVTAGVELDAVVEIAVEDEEIVQRIAGRRVHEASGRVYHIVYNPPKIAGKDDITGEELVQRKDDTEETVRHRLSVYHSQTKPLVEFYQNLSAKNGGKPKYSHIPGVGSVEAITAKVLEALS</sequence>
<keyword id="KW-0067">ATP-binding</keyword>
<keyword id="KW-0963">Cytoplasm</keyword>
<keyword id="KW-0418">Kinase</keyword>
<keyword id="KW-0545">Nucleotide biosynthesis</keyword>
<keyword id="KW-0547">Nucleotide-binding</keyword>
<keyword id="KW-0808">Transferase</keyword>
<organism>
    <name type="scientific">Pseudomonas fluorescens (strain Pf0-1)</name>
    <dbReference type="NCBI Taxonomy" id="205922"/>
    <lineage>
        <taxon>Bacteria</taxon>
        <taxon>Pseudomonadati</taxon>
        <taxon>Pseudomonadota</taxon>
        <taxon>Gammaproteobacteria</taxon>
        <taxon>Pseudomonadales</taxon>
        <taxon>Pseudomonadaceae</taxon>
        <taxon>Pseudomonas</taxon>
    </lineage>
</organism>
<dbReference type="EC" id="2.7.4.3" evidence="1"/>
<dbReference type="EMBL" id="CP000094">
    <property type="protein sequence ID" value="ABA72813.1"/>
    <property type="molecule type" value="Genomic_DNA"/>
</dbReference>
<dbReference type="RefSeq" id="WP_007954716.1">
    <property type="nucleotide sequence ID" value="NC_007492.2"/>
</dbReference>
<dbReference type="SMR" id="Q3KHE3"/>
<dbReference type="KEGG" id="pfo:Pfl01_1070"/>
<dbReference type="eggNOG" id="COG0563">
    <property type="taxonomic scope" value="Bacteria"/>
</dbReference>
<dbReference type="HOGENOM" id="CLU_032354_1_2_6"/>
<dbReference type="UniPathway" id="UPA00588">
    <property type="reaction ID" value="UER00649"/>
</dbReference>
<dbReference type="Proteomes" id="UP000002704">
    <property type="component" value="Chromosome"/>
</dbReference>
<dbReference type="GO" id="GO:0005737">
    <property type="term" value="C:cytoplasm"/>
    <property type="evidence" value="ECO:0007669"/>
    <property type="project" value="UniProtKB-SubCell"/>
</dbReference>
<dbReference type="GO" id="GO:0004017">
    <property type="term" value="F:adenylate kinase activity"/>
    <property type="evidence" value="ECO:0007669"/>
    <property type="project" value="UniProtKB-UniRule"/>
</dbReference>
<dbReference type="GO" id="GO:0005524">
    <property type="term" value="F:ATP binding"/>
    <property type="evidence" value="ECO:0007669"/>
    <property type="project" value="UniProtKB-UniRule"/>
</dbReference>
<dbReference type="GO" id="GO:0044209">
    <property type="term" value="P:AMP salvage"/>
    <property type="evidence" value="ECO:0007669"/>
    <property type="project" value="UniProtKB-UniRule"/>
</dbReference>
<dbReference type="CDD" id="cd01428">
    <property type="entry name" value="ADK"/>
    <property type="match status" value="1"/>
</dbReference>
<dbReference type="FunFam" id="3.40.50.300:FF:000106">
    <property type="entry name" value="Adenylate kinase mitochondrial"/>
    <property type="match status" value="1"/>
</dbReference>
<dbReference type="Gene3D" id="3.40.50.300">
    <property type="entry name" value="P-loop containing nucleotide triphosphate hydrolases"/>
    <property type="match status" value="1"/>
</dbReference>
<dbReference type="HAMAP" id="MF_00235">
    <property type="entry name" value="Adenylate_kinase_Adk"/>
    <property type="match status" value="1"/>
</dbReference>
<dbReference type="InterPro" id="IPR006259">
    <property type="entry name" value="Adenyl_kin_sub"/>
</dbReference>
<dbReference type="InterPro" id="IPR000850">
    <property type="entry name" value="Adenylat/UMP-CMP_kin"/>
</dbReference>
<dbReference type="InterPro" id="IPR033690">
    <property type="entry name" value="Adenylat_kinase_CS"/>
</dbReference>
<dbReference type="InterPro" id="IPR007862">
    <property type="entry name" value="Adenylate_kinase_lid-dom"/>
</dbReference>
<dbReference type="InterPro" id="IPR027417">
    <property type="entry name" value="P-loop_NTPase"/>
</dbReference>
<dbReference type="NCBIfam" id="TIGR01351">
    <property type="entry name" value="adk"/>
    <property type="match status" value="1"/>
</dbReference>
<dbReference type="NCBIfam" id="NF001379">
    <property type="entry name" value="PRK00279.1-1"/>
    <property type="match status" value="1"/>
</dbReference>
<dbReference type="NCBIfam" id="NF001380">
    <property type="entry name" value="PRK00279.1-2"/>
    <property type="match status" value="1"/>
</dbReference>
<dbReference type="NCBIfam" id="NF001381">
    <property type="entry name" value="PRK00279.1-3"/>
    <property type="match status" value="1"/>
</dbReference>
<dbReference type="NCBIfam" id="NF011100">
    <property type="entry name" value="PRK14527.1"/>
    <property type="match status" value="1"/>
</dbReference>
<dbReference type="PANTHER" id="PTHR23359">
    <property type="entry name" value="NUCLEOTIDE KINASE"/>
    <property type="match status" value="1"/>
</dbReference>
<dbReference type="Pfam" id="PF00406">
    <property type="entry name" value="ADK"/>
    <property type="match status" value="1"/>
</dbReference>
<dbReference type="Pfam" id="PF05191">
    <property type="entry name" value="ADK_lid"/>
    <property type="match status" value="1"/>
</dbReference>
<dbReference type="PRINTS" id="PR00094">
    <property type="entry name" value="ADENYLTKNASE"/>
</dbReference>
<dbReference type="SUPFAM" id="SSF52540">
    <property type="entry name" value="P-loop containing nucleoside triphosphate hydrolases"/>
    <property type="match status" value="1"/>
</dbReference>
<dbReference type="PROSITE" id="PS00113">
    <property type="entry name" value="ADENYLATE_KINASE"/>
    <property type="match status" value="1"/>
</dbReference>
<reference key="1">
    <citation type="journal article" date="2009" name="Genome Biol.">
        <title>Genomic and genetic analyses of diversity and plant interactions of Pseudomonas fluorescens.</title>
        <authorList>
            <person name="Silby M.W."/>
            <person name="Cerdeno-Tarraga A.M."/>
            <person name="Vernikos G.S."/>
            <person name="Giddens S.R."/>
            <person name="Jackson R.W."/>
            <person name="Preston G.M."/>
            <person name="Zhang X.-X."/>
            <person name="Moon C.D."/>
            <person name="Gehrig S.M."/>
            <person name="Godfrey S.A.C."/>
            <person name="Knight C.G."/>
            <person name="Malone J.G."/>
            <person name="Robinson Z."/>
            <person name="Spiers A.J."/>
            <person name="Harris S."/>
            <person name="Challis G.L."/>
            <person name="Yaxley A.M."/>
            <person name="Harris D."/>
            <person name="Seeger K."/>
            <person name="Murphy L."/>
            <person name="Rutter S."/>
            <person name="Squares R."/>
            <person name="Quail M.A."/>
            <person name="Saunders E."/>
            <person name="Mavromatis K."/>
            <person name="Brettin T.S."/>
            <person name="Bentley S.D."/>
            <person name="Hothersall J."/>
            <person name="Stephens E."/>
            <person name="Thomas C.M."/>
            <person name="Parkhill J."/>
            <person name="Levy S.B."/>
            <person name="Rainey P.B."/>
            <person name="Thomson N.R."/>
        </authorList>
    </citation>
    <scope>NUCLEOTIDE SEQUENCE [LARGE SCALE GENOMIC DNA]</scope>
    <source>
        <strain>Pf0-1</strain>
    </source>
</reference>
<evidence type="ECO:0000255" key="1">
    <source>
        <dbReference type="HAMAP-Rule" id="MF_00235"/>
    </source>
</evidence>
<accession>Q3KHE3</accession>
<name>KAD_PSEPF</name>
<protein>
    <recommendedName>
        <fullName evidence="1">Adenylate kinase</fullName>
        <shortName evidence="1">AK</shortName>
        <ecNumber evidence="1">2.7.4.3</ecNumber>
    </recommendedName>
    <alternativeName>
        <fullName evidence="1">ATP-AMP transphosphorylase</fullName>
    </alternativeName>
    <alternativeName>
        <fullName evidence="1">ATP:AMP phosphotransferase</fullName>
    </alternativeName>
    <alternativeName>
        <fullName evidence="1">Adenylate monophosphate kinase</fullName>
    </alternativeName>
</protein>
<gene>
    <name evidence="1" type="primary">adk</name>
    <name type="ordered locus">Pfl01_1070</name>
</gene>
<proteinExistence type="inferred from homology"/>
<comment type="function">
    <text evidence="1">Catalyzes the reversible transfer of the terminal phosphate group between ATP and AMP. Plays an important role in cellular energy homeostasis and in adenine nucleotide metabolism.</text>
</comment>
<comment type="catalytic activity">
    <reaction evidence="1">
        <text>AMP + ATP = 2 ADP</text>
        <dbReference type="Rhea" id="RHEA:12973"/>
        <dbReference type="ChEBI" id="CHEBI:30616"/>
        <dbReference type="ChEBI" id="CHEBI:456215"/>
        <dbReference type="ChEBI" id="CHEBI:456216"/>
        <dbReference type="EC" id="2.7.4.3"/>
    </reaction>
</comment>
<comment type="pathway">
    <text evidence="1">Purine metabolism; AMP biosynthesis via salvage pathway; AMP from ADP: step 1/1.</text>
</comment>
<comment type="subunit">
    <text evidence="1">Monomer.</text>
</comment>
<comment type="subcellular location">
    <subcellularLocation>
        <location evidence="1">Cytoplasm</location>
    </subcellularLocation>
</comment>
<comment type="domain">
    <text evidence="1">Consists of three domains, a large central CORE domain and two small peripheral domains, NMPbind and LID, which undergo movements during catalysis. The LID domain closes over the site of phosphoryl transfer upon ATP binding. Assembling and dissambling the active center during each catalytic cycle provides an effective means to prevent ATP hydrolysis.</text>
</comment>
<comment type="similarity">
    <text evidence="1">Belongs to the adenylate kinase family.</text>
</comment>
<feature type="chain" id="PRO_1000058885" description="Adenylate kinase">
    <location>
        <begin position="1"/>
        <end position="216"/>
    </location>
</feature>
<feature type="region of interest" description="NMP" evidence="1">
    <location>
        <begin position="30"/>
        <end position="59"/>
    </location>
</feature>
<feature type="region of interest" description="LID" evidence="1">
    <location>
        <begin position="122"/>
        <end position="159"/>
    </location>
</feature>
<feature type="binding site" evidence="1">
    <location>
        <begin position="10"/>
        <end position="15"/>
    </location>
    <ligand>
        <name>ATP</name>
        <dbReference type="ChEBI" id="CHEBI:30616"/>
    </ligand>
</feature>
<feature type="binding site" evidence="1">
    <location>
        <position position="31"/>
    </location>
    <ligand>
        <name>AMP</name>
        <dbReference type="ChEBI" id="CHEBI:456215"/>
    </ligand>
</feature>
<feature type="binding site" evidence="1">
    <location>
        <position position="36"/>
    </location>
    <ligand>
        <name>AMP</name>
        <dbReference type="ChEBI" id="CHEBI:456215"/>
    </ligand>
</feature>
<feature type="binding site" evidence="1">
    <location>
        <begin position="57"/>
        <end position="59"/>
    </location>
    <ligand>
        <name>AMP</name>
        <dbReference type="ChEBI" id="CHEBI:456215"/>
    </ligand>
</feature>
<feature type="binding site" evidence="1">
    <location>
        <begin position="85"/>
        <end position="88"/>
    </location>
    <ligand>
        <name>AMP</name>
        <dbReference type="ChEBI" id="CHEBI:456215"/>
    </ligand>
</feature>
<feature type="binding site" evidence="1">
    <location>
        <position position="92"/>
    </location>
    <ligand>
        <name>AMP</name>
        <dbReference type="ChEBI" id="CHEBI:456215"/>
    </ligand>
</feature>
<feature type="binding site" evidence="1">
    <location>
        <position position="123"/>
    </location>
    <ligand>
        <name>ATP</name>
        <dbReference type="ChEBI" id="CHEBI:30616"/>
    </ligand>
</feature>
<feature type="binding site" evidence="1">
    <location>
        <begin position="132"/>
        <end position="133"/>
    </location>
    <ligand>
        <name>ATP</name>
        <dbReference type="ChEBI" id="CHEBI:30616"/>
    </ligand>
</feature>
<feature type="binding site" evidence="1">
    <location>
        <position position="156"/>
    </location>
    <ligand>
        <name>AMP</name>
        <dbReference type="ChEBI" id="CHEBI:456215"/>
    </ligand>
</feature>
<feature type="binding site" evidence="1">
    <location>
        <position position="167"/>
    </location>
    <ligand>
        <name>AMP</name>
        <dbReference type="ChEBI" id="CHEBI:456215"/>
    </ligand>
</feature>
<feature type="binding site" evidence="1">
    <location>
        <position position="202"/>
    </location>
    <ligand>
        <name>ATP</name>
        <dbReference type="ChEBI" id="CHEBI:30616"/>
    </ligand>
</feature>